<comment type="function">
    <text evidence="1">Regulates the activity of L-type calcium channels that contain CACNA1C as pore-forming subunit.</text>
</comment>
<comment type="subunit">
    <text evidence="1 3">Interacts with CACNA1C (PubMed:21127204). Identified in a complex with the L-type calcium channel subunits CACNA1C, CACNA2D1 and either CACNB1 or CACNB2 (By similarity).</text>
</comment>
<comment type="subcellular location">
    <subcellularLocation>
        <location evidence="1">Cell membrane</location>
        <topology evidence="1">Multi-pass membrane protein</topology>
    </subcellularLocation>
</comment>
<comment type="tissue specificity">
    <text evidence="3">Detected in brain and heart (at protein level).</text>
</comment>
<comment type="similarity">
    <text evidence="4">Belongs to the PMP-22/EMP/MP20 family. CACNG subfamily.</text>
</comment>
<sequence>MMWSNFFMQEEDRRRTAVGRRRAQEQQNLGLTPEREGKIKLGLLVAIVGATLAVLAVGTEFWVELNTYKTNGSAVCEAAHLGLWKVCIKRLWQADVPAGRETCGPAELPGEANCTYFKFFTTGENARIFQRTTKKEVNLAAAVIAVLGLTAMALGCLCVIMVLSKGAESLLRLGAVCFGLSGLLLFVSLEVFRHSVGALLQGVNPETPPAPRLAYEYSWSLGCGVGAGLILLLGGVCFLLLTLPSWPWRSLCPKWGGPTA</sequence>
<dbReference type="EMBL" id="AF361348">
    <property type="protein sequence ID" value="AAL50043.1"/>
    <property type="molecule type" value="mRNA"/>
</dbReference>
<dbReference type="CCDS" id="CCDS39726.1"/>
<dbReference type="RefSeq" id="NP_573446.1">
    <property type="nucleotide sequence ID" value="NM_133183.2"/>
</dbReference>
<dbReference type="SMR" id="Q8VHW3"/>
<dbReference type="FunCoup" id="Q8VHW3">
    <property type="interactions" value="383"/>
</dbReference>
<dbReference type="STRING" id="10090.ENSMUSP00000138622"/>
<dbReference type="GlyGen" id="Q8VHW3">
    <property type="glycosylation" value="1 site"/>
</dbReference>
<dbReference type="PhosphoSitePlus" id="Q8VHW3"/>
<dbReference type="PaxDb" id="10090-ENSMUSP00000138622"/>
<dbReference type="ProteomicsDB" id="281422"/>
<dbReference type="Antibodypedia" id="32772">
    <property type="antibodies" value="116 antibodies from 18 providers"/>
</dbReference>
<dbReference type="DNASU" id="54378"/>
<dbReference type="Ensembl" id="ENSMUST00000183200.8">
    <property type="protein sequence ID" value="ENSMUSP00000138622.2"/>
    <property type="gene ID" value="ENSMUSG00000078815.9"/>
</dbReference>
<dbReference type="GeneID" id="54378"/>
<dbReference type="KEGG" id="mmu:54378"/>
<dbReference type="UCSC" id="uc009euy.1">
    <property type="organism name" value="mouse"/>
</dbReference>
<dbReference type="AGR" id="MGI:1859168"/>
<dbReference type="CTD" id="59285"/>
<dbReference type="MGI" id="MGI:1859168">
    <property type="gene designation" value="Cacng6"/>
</dbReference>
<dbReference type="VEuPathDB" id="HostDB:ENSMUSG00000078815"/>
<dbReference type="eggNOG" id="ENOG502QUPR">
    <property type="taxonomic scope" value="Eukaryota"/>
</dbReference>
<dbReference type="GeneTree" id="ENSGT00390000007786"/>
<dbReference type="InParanoid" id="Q8VHW3"/>
<dbReference type="OMA" id="PWQRCLP"/>
<dbReference type="OrthoDB" id="8890470at2759"/>
<dbReference type="PhylomeDB" id="Q8VHW3"/>
<dbReference type="TreeFam" id="TF331651"/>
<dbReference type="Reactome" id="R-MMU-5576892">
    <property type="pathway name" value="Phase 0 - rapid depolarisation"/>
</dbReference>
<dbReference type="Reactome" id="R-MMU-5576893">
    <property type="pathway name" value="Phase 2 - plateau phase"/>
</dbReference>
<dbReference type="BioGRID-ORCS" id="54378">
    <property type="hits" value="3 hits in 76 CRISPR screens"/>
</dbReference>
<dbReference type="PRO" id="PR:Q8VHW3"/>
<dbReference type="Proteomes" id="UP000000589">
    <property type="component" value="Chromosome 7"/>
</dbReference>
<dbReference type="RNAct" id="Q8VHW3">
    <property type="molecule type" value="protein"/>
</dbReference>
<dbReference type="Bgee" id="ENSMUSG00000078815">
    <property type="expression patterns" value="Expressed in quadriceps femoris and 42 other cell types or tissues"/>
</dbReference>
<dbReference type="ExpressionAtlas" id="Q8VHW3">
    <property type="expression patterns" value="baseline and differential"/>
</dbReference>
<dbReference type="GO" id="GO:1990454">
    <property type="term" value="C:L-type voltage-gated calcium channel complex"/>
    <property type="evidence" value="ECO:0000250"/>
    <property type="project" value="UniProtKB"/>
</dbReference>
<dbReference type="GO" id="GO:0005262">
    <property type="term" value="F:calcium channel activity"/>
    <property type="evidence" value="ECO:0007669"/>
    <property type="project" value="UniProtKB-KW"/>
</dbReference>
<dbReference type="GO" id="GO:0005246">
    <property type="term" value="F:calcium channel regulator activity"/>
    <property type="evidence" value="ECO:0000250"/>
    <property type="project" value="UniProtKB"/>
</dbReference>
<dbReference type="FunFam" id="1.20.140.150:FF:000038">
    <property type="entry name" value="Voltage-dependent calcium channel gamma-6 subunit"/>
    <property type="match status" value="1"/>
</dbReference>
<dbReference type="Gene3D" id="1.20.140.150">
    <property type="match status" value="1"/>
</dbReference>
<dbReference type="InterPro" id="IPR004031">
    <property type="entry name" value="PMP22/EMP/MP20/Claudin"/>
</dbReference>
<dbReference type="InterPro" id="IPR008370">
    <property type="entry name" value="VDCC_g6su"/>
</dbReference>
<dbReference type="InterPro" id="IPR008368">
    <property type="entry name" value="VDCC_gsu"/>
</dbReference>
<dbReference type="PANTHER" id="PTHR15025">
    <property type="entry name" value="VOLTAGE-DEPENDENT CALCIUM CHANNEL GAMMA-1 SUBUNIT-RELATED"/>
    <property type="match status" value="1"/>
</dbReference>
<dbReference type="PANTHER" id="PTHR15025:SF6">
    <property type="entry name" value="VOLTAGE-DEPENDENT CALCIUM CHANNEL GAMMA-6 SUBUNIT"/>
    <property type="match status" value="1"/>
</dbReference>
<dbReference type="Pfam" id="PF13903">
    <property type="entry name" value="Claudin_2"/>
    <property type="match status" value="1"/>
</dbReference>
<dbReference type="PRINTS" id="PR01792">
    <property type="entry name" value="VDCCGAMMA"/>
</dbReference>
<dbReference type="PRINTS" id="PR01794">
    <property type="entry name" value="VDCCGAMMA6"/>
</dbReference>
<reference key="1">
    <citation type="journal article" date="2001" name="Gene">
        <title>Calcium channel gamma subunits provide insights into the evolution of this gene family.</title>
        <authorList>
            <person name="Chu P.-J."/>
            <person name="Robertson H.M."/>
            <person name="Best P.M."/>
        </authorList>
    </citation>
    <scope>NUCLEOTIDE SEQUENCE [MRNA]</scope>
    <source>
        <strain>BALB/cJ</strain>
    </source>
</reference>
<reference key="2">
    <citation type="journal article" date="2011" name="FASEB J.">
        <title>Cardiac L-type calcium channel (Cav1.2) associates with gamma subunits.</title>
        <authorList>
            <person name="Yang L."/>
            <person name="Katchman A."/>
            <person name="Morrow J.P."/>
            <person name="Doshi D."/>
            <person name="Marx S.O."/>
        </authorList>
    </citation>
    <scope>IDENTIFICATION IN A COMPLEX WITH CACNA1C</scope>
    <scope>SUBUNIT</scope>
    <scope>TISSUE SPECIFICITY</scope>
</reference>
<proteinExistence type="evidence at protein level"/>
<organism>
    <name type="scientific">Mus musculus</name>
    <name type="common">Mouse</name>
    <dbReference type="NCBI Taxonomy" id="10090"/>
    <lineage>
        <taxon>Eukaryota</taxon>
        <taxon>Metazoa</taxon>
        <taxon>Chordata</taxon>
        <taxon>Craniata</taxon>
        <taxon>Vertebrata</taxon>
        <taxon>Euteleostomi</taxon>
        <taxon>Mammalia</taxon>
        <taxon>Eutheria</taxon>
        <taxon>Euarchontoglires</taxon>
        <taxon>Glires</taxon>
        <taxon>Rodentia</taxon>
        <taxon>Myomorpha</taxon>
        <taxon>Muroidea</taxon>
        <taxon>Muridae</taxon>
        <taxon>Murinae</taxon>
        <taxon>Mus</taxon>
        <taxon>Mus</taxon>
    </lineage>
</organism>
<name>CCG6_MOUSE</name>
<keyword id="KW-0106">Calcium</keyword>
<keyword id="KW-0107">Calcium channel</keyword>
<keyword id="KW-0109">Calcium transport</keyword>
<keyword id="KW-1003">Cell membrane</keyword>
<keyword id="KW-0407">Ion channel</keyword>
<keyword id="KW-0406">Ion transport</keyword>
<keyword id="KW-0472">Membrane</keyword>
<keyword id="KW-1185">Reference proteome</keyword>
<keyword id="KW-0812">Transmembrane</keyword>
<keyword id="KW-1133">Transmembrane helix</keyword>
<keyword id="KW-0813">Transport</keyword>
<keyword id="KW-0851">Voltage-gated channel</keyword>
<evidence type="ECO:0000250" key="1">
    <source>
        <dbReference type="UniProtKB" id="Q9BXT2"/>
    </source>
</evidence>
<evidence type="ECO:0000255" key="2"/>
<evidence type="ECO:0000269" key="3">
    <source>
    </source>
</evidence>
<evidence type="ECO:0000305" key="4"/>
<accession>Q8VHW3</accession>
<protein>
    <recommendedName>
        <fullName>Voltage-dependent calcium channel gamma-6 subunit</fullName>
    </recommendedName>
    <alternativeName>
        <fullName>Neuronal voltage-gated calcium channel gamma-6 subunit</fullName>
    </alternativeName>
</protein>
<feature type="chain" id="PRO_0000164685" description="Voltage-dependent calcium channel gamma-6 subunit">
    <location>
        <begin position="1"/>
        <end position="260"/>
    </location>
</feature>
<feature type="transmembrane region" description="Helical" evidence="2">
    <location>
        <begin position="43"/>
        <end position="63"/>
    </location>
</feature>
<feature type="transmembrane region" description="Helical" evidence="2">
    <location>
        <begin position="143"/>
        <end position="163"/>
    </location>
</feature>
<feature type="transmembrane region" description="Helical" evidence="2">
    <location>
        <begin position="169"/>
        <end position="189"/>
    </location>
</feature>
<feature type="transmembrane region" description="Helical" evidence="2">
    <location>
        <begin position="221"/>
        <end position="241"/>
    </location>
</feature>
<gene>
    <name type="primary">Cacng6</name>
</gene>